<sequence length="130" mass="13837">MPATVKKTGSKKSKRNVPNGVVHIQSTFNNTIVSITDTSGHVISWSSAGASGFKGARKGTPFAAQTAAEAAARRALDQGMRQIEVLVRGPGAGRETAIRALQVAGLEITLIRDVTPLPHNGCRRPKRRRV</sequence>
<protein>
    <recommendedName>
        <fullName evidence="1">Small ribosomal subunit protein uS11</fullName>
    </recommendedName>
    <alternativeName>
        <fullName evidence="2">30S ribosomal protein S11</fullName>
    </alternativeName>
</protein>
<gene>
    <name evidence="1" type="primary">rpsK</name>
    <name evidence="1" type="synonym">rps11</name>
    <name type="ordered locus">P9301_17281</name>
</gene>
<dbReference type="EMBL" id="CP000576">
    <property type="protein sequence ID" value="ABO18351.1"/>
    <property type="molecule type" value="Genomic_DNA"/>
</dbReference>
<dbReference type="RefSeq" id="WP_011863644.1">
    <property type="nucleotide sequence ID" value="NC_009091.1"/>
</dbReference>
<dbReference type="SMR" id="A3PF26"/>
<dbReference type="STRING" id="167546.P9301_17281"/>
<dbReference type="KEGG" id="pmg:P9301_17281"/>
<dbReference type="eggNOG" id="COG0100">
    <property type="taxonomic scope" value="Bacteria"/>
</dbReference>
<dbReference type="HOGENOM" id="CLU_072439_5_0_3"/>
<dbReference type="OrthoDB" id="9806415at2"/>
<dbReference type="Proteomes" id="UP000001430">
    <property type="component" value="Chromosome"/>
</dbReference>
<dbReference type="GO" id="GO:1990904">
    <property type="term" value="C:ribonucleoprotein complex"/>
    <property type="evidence" value="ECO:0007669"/>
    <property type="project" value="UniProtKB-KW"/>
</dbReference>
<dbReference type="GO" id="GO:0005840">
    <property type="term" value="C:ribosome"/>
    <property type="evidence" value="ECO:0007669"/>
    <property type="project" value="UniProtKB-KW"/>
</dbReference>
<dbReference type="GO" id="GO:0019843">
    <property type="term" value="F:rRNA binding"/>
    <property type="evidence" value="ECO:0007669"/>
    <property type="project" value="UniProtKB-UniRule"/>
</dbReference>
<dbReference type="GO" id="GO:0003735">
    <property type="term" value="F:structural constituent of ribosome"/>
    <property type="evidence" value="ECO:0007669"/>
    <property type="project" value="InterPro"/>
</dbReference>
<dbReference type="GO" id="GO:0006412">
    <property type="term" value="P:translation"/>
    <property type="evidence" value="ECO:0007669"/>
    <property type="project" value="UniProtKB-UniRule"/>
</dbReference>
<dbReference type="FunFam" id="3.30.420.80:FF:000001">
    <property type="entry name" value="30S ribosomal protein S11"/>
    <property type="match status" value="1"/>
</dbReference>
<dbReference type="Gene3D" id="3.30.420.80">
    <property type="entry name" value="Ribosomal protein S11"/>
    <property type="match status" value="1"/>
</dbReference>
<dbReference type="HAMAP" id="MF_01310">
    <property type="entry name" value="Ribosomal_uS11"/>
    <property type="match status" value="1"/>
</dbReference>
<dbReference type="InterPro" id="IPR001971">
    <property type="entry name" value="Ribosomal_uS11"/>
</dbReference>
<dbReference type="InterPro" id="IPR019981">
    <property type="entry name" value="Ribosomal_uS11_bac-type"/>
</dbReference>
<dbReference type="InterPro" id="IPR018102">
    <property type="entry name" value="Ribosomal_uS11_CS"/>
</dbReference>
<dbReference type="InterPro" id="IPR036967">
    <property type="entry name" value="Ribosomal_uS11_sf"/>
</dbReference>
<dbReference type="NCBIfam" id="NF003698">
    <property type="entry name" value="PRK05309.1"/>
    <property type="match status" value="1"/>
</dbReference>
<dbReference type="NCBIfam" id="TIGR03632">
    <property type="entry name" value="uS11_bact"/>
    <property type="match status" value="1"/>
</dbReference>
<dbReference type="PANTHER" id="PTHR11759">
    <property type="entry name" value="40S RIBOSOMAL PROTEIN S14/30S RIBOSOMAL PROTEIN S11"/>
    <property type="match status" value="1"/>
</dbReference>
<dbReference type="Pfam" id="PF00411">
    <property type="entry name" value="Ribosomal_S11"/>
    <property type="match status" value="1"/>
</dbReference>
<dbReference type="PIRSF" id="PIRSF002131">
    <property type="entry name" value="Ribosomal_S11"/>
    <property type="match status" value="1"/>
</dbReference>
<dbReference type="SUPFAM" id="SSF53137">
    <property type="entry name" value="Translational machinery components"/>
    <property type="match status" value="1"/>
</dbReference>
<dbReference type="PROSITE" id="PS00054">
    <property type="entry name" value="RIBOSOMAL_S11"/>
    <property type="match status" value="1"/>
</dbReference>
<feature type="chain" id="PRO_0000294821" description="Small ribosomal subunit protein uS11">
    <location>
        <begin position="1"/>
        <end position="130"/>
    </location>
</feature>
<proteinExistence type="inferred from homology"/>
<organism>
    <name type="scientific">Prochlorococcus marinus (strain MIT 9301)</name>
    <dbReference type="NCBI Taxonomy" id="167546"/>
    <lineage>
        <taxon>Bacteria</taxon>
        <taxon>Bacillati</taxon>
        <taxon>Cyanobacteriota</taxon>
        <taxon>Cyanophyceae</taxon>
        <taxon>Synechococcales</taxon>
        <taxon>Prochlorococcaceae</taxon>
        <taxon>Prochlorococcus</taxon>
    </lineage>
</organism>
<accession>A3PF26</accession>
<reference key="1">
    <citation type="journal article" date="2007" name="PLoS Genet.">
        <title>Patterns and implications of gene gain and loss in the evolution of Prochlorococcus.</title>
        <authorList>
            <person name="Kettler G.C."/>
            <person name="Martiny A.C."/>
            <person name="Huang K."/>
            <person name="Zucker J."/>
            <person name="Coleman M.L."/>
            <person name="Rodrigue S."/>
            <person name="Chen F."/>
            <person name="Lapidus A."/>
            <person name="Ferriera S."/>
            <person name="Johnson J."/>
            <person name="Steglich C."/>
            <person name="Church G.M."/>
            <person name="Richardson P."/>
            <person name="Chisholm S.W."/>
        </authorList>
    </citation>
    <scope>NUCLEOTIDE SEQUENCE [LARGE SCALE GENOMIC DNA]</scope>
    <source>
        <strain>MIT 9301</strain>
    </source>
</reference>
<keyword id="KW-1185">Reference proteome</keyword>
<keyword id="KW-0687">Ribonucleoprotein</keyword>
<keyword id="KW-0689">Ribosomal protein</keyword>
<keyword id="KW-0694">RNA-binding</keyword>
<keyword id="KW-0699">rRNA-binding</keyword>
<name>RS11_PROM0</name>
<evidence type="ECO:0000255" key="1">
    <source>
        <dbReference type="HAMAP-Rule" id="MF_01310"/>
    </source>
</evidence>
<evidence type="ECO:0000305" key="2"/>
<comment type="function">
    <text evidence="1">Located on the platform of the 30S subunit, it bridges several disparate RNA helices of the 16S rRNA. Forms part of the Shine-Dalgarno cleft in the 70S ribosome.</text>
</comment>
<comment type="subunit">
    <text evidence="1">Part of the 30S ribosomal subunit. Interacts with proteins S7 and S18. Binds to IF-3.</text>
</comment>
<comment type="similarity">
    <text evidence="1">Belongs to the universal ribosomal protein uS11 family.</text>
</comment>